<feature type="chain" id="PRO_0000062346" description="Ribulose bisphosphate carboxylase large chain">
    <location>
        <begin position="1" status="less than"/>
        <end position="465"/>
    </location>
</feature>
<feature type="active site" description="Proton acceptor" evidence="1">
    <location>
        <position position="165"/>
    </location>
</feature>
<feature type="active site" description="Proton acceptor" evidence="1">
    <location>
        <position position="284"/>
    </location>
</feature>
<feature type="binding site" description="in homodimeric partner" evidence="1">
    <location>
        <position position="113"/>
    </location>
    <ligand>
        <name>substrate</name>
    </ligand>
</feature>
<feature type="binding site" evidence="1">
    <location>
        <position position="163"/>
    </location>
    <ligand>
        <name>substrate</name>
    </ligand>
</feature>
<feature type="binding site" evidence="1">
    <location>
        <position position="167"/>
    </location>
    <ligand>
        <name>substrate</name>
    </ligand>
</feature>
<feature type="binding site" description="via carbamate group" evidence="1">
    <location>
        <position position="191"/>
    </location>
    <ligand>
        <name>Mg(2+)</name>
        <dbReference type="ChEBI" id="CHEBI:18420"/>
    </ligand>
</feature>
<feature type="binding site" evidence="1">
    <location>
        <position position="193"/>
    </location>
    <ligand>
        <name>Mg(2+)</name>
        <dbReference type="ChEBI" id="CHEBI:18420"/>
    </ligand>
</feature>
<feature type="binding site" evidence="1">
    <location>
        <position position="194"/>
    </location>
    <ligand>
        <name>Mg(2+)</name>
        <dbReference type="ChEBI" id="CHEBI:18420"/>
    </ligand>
</feature>
<feature type="binding site" evidence="1">
    <location>
        <position position="285"/>
    </location>
    <ligand>
        <name>substrate</name>
    </ligand>
</feature>
<feature type="binding site" evidence="1">
    <location>
        <position position="317"/>
    </location>
    <ligand>
        <name>substrate</name>
    </ligand>
</feature>
<feature type="binding site" evidence="1">
    <location>
        <position position="369"/>
    </location>
    <ligand>
        <name>substrate</name>
    </ligand>
</feature>
<feature type="site" description="Transition state stabilizer" evidence="1">
    <location>
        <position position="324"/>
    </location>
</feature>
<feature type="modified residue" description="N6,N6,N6-trimethyllysine" evidence="1">
    <location>
        <position position="4"/>
    </location>
</feature>
<feature type="modified residue" description="N6-carboxylysine" evidence="1">
    <location>
        <position position="191"/>
    </location>
</feature>
<feature type="disulfide bond" description="Interchain; in linked form" evidence="1">
    <location>
        <position position="237"/>
    </location>
</feature>
<feature type="non-terminal residue">
    <location>
        <position position="1"/>
    </location>
</feature>
<geneLocation type="chloroplast"/>
<accession>Q07209</accession>
<accession>Q38682</accession>
<name>RBL_AILAL</name>
<evidence type="ECO:0000255" key="1">
    <source>
        <dbReference type="HAMAP-Rule" id="MF_01338"/>
    </source>
</evidence>
<organism>
    <name type="scientific">Ailanthus altissima</name>
    <name type="common">Tree-of-heaven</name>
    <name type="synonym">Toxicodendron altissimum</name>
    <dbReference type="NCBI Taxonomy" id="2768810"/>
    <lineage>
        <taxon>Eukaryota</taxon>
        <taxon>Viridiplantae</taxon>
        <taxon>Streptophyta</taxon>
        <taxon>Embryophyta</taxon>
        <taxon>Tracheophyta</taxon>
        <taxon>Spermatophyta</taxon>
        <taxon>Magnoliopsida</taxon>
        <taxon>eudicotyledons</taxon>
        <taxon>Gunneridae</taxon>
        <taxon>Pentapetalae</taxon>
        <taxon>rosids</taxon>
        <taxon>malvids</taxon>
        <taxon>Sapindales</taxon>
        <taxon>Simaroubaceae</taxon>
        <taxon>Ailanthus</taxon>
    </lineage>
</organism>
<gene>
    <name evidence="1" type="primary">rbcL</name>
</gene>
<proteinExistence type="inferred from homology"/>
<keyword id="KW-0113">Calvin cycle</keyword>
<keyword id="KW-0120">Carbon dioxide fixation</keyword>
<keyword id="KW-0150">Chloroplast</keyword>
<keyword id="KW-1015">Disulfide bond</keyword>
<keyword id="KW-0456">Lyase</keyword>
<keyword id="KW-0460">Magnesium</keyword>
<keyword id="KW-0479">Metal-binding</keyword>
<keyword id="KW-0488">Methylation</keyword>
<keyword id="KW-0503">Monooxygenase</keyword>
<keyword id="KW-0560">Oxidoreductase</keyword>
<keyword id="KW-0601">Photorespiration</keyword>
<keyword id="KW-0602">Photosynthesis</keyword>
<keyword id="KW-0934">Plastid</keyword>
<comment type="function">
    <text evidence="1">RuBisCO catalyzes two reactions: the carboxylation of D-ribulose 1,5-bisphosphate, the primary event in carbon dioxide fixation, as well as the oxidative fragmentation of the pentose substrate in the photorespiration process. Both reactions occur simultaneously and in competition at the same active site.</text>
</comment>
<comment type="catalytic activity">
    <reaction evidence="1">
        <text>2 (2R)-3-phosphoglycerate + 2 H(+) = D-ribulose 1,5-bisphosphate + CO2 + H2O</text>
        <dbReference type="Rhea" id="RHEA:23124"/>
        <dbReference type="ChEBI" id="CHEBI:15377"/>
        <dbReference type="ChEBI" id="CHEBI:15378"/>
        <dbReference type="ChEBI" id="CHEBI:16526"/>
        <dbReference type="ChEBI" id="CHEBI:57870"/>
        <dbReference type="ChEBI" id="CHEBI:58272"/>
        <dbReference type="EC" id="4.1.1.39"/>
    </reaction>
</comment>
<comment type="catalytic activity">
    <reaction evidence="1">
        <text>D-ribulose 1,5-bisphosphate + O2 = 2-phosphoglycolate + (2R)-3-phosphoglycerate + 2 H(+)</text>
        <dbReference type="Rhea" id="RHEA:36631"/>
        <dbReference type="ChEBI" id="CHEBI:15378"/>
        <dbReference type="ChEBI" id="CHEBI:15379"/>
        <dbReference type="ChEBI" id="CHEBI:57870"/>
        <dbReference type="ChEBI" id="CHEBI:58033"/>
        <dbReference type="ChEBI" id="CHEBI:58272"/>
    </reaction>
</comment>
<comment type="cofactor">
    <cofactor evidence="1">
        <name>Mg(2+)</name>
        <dbReference type="ChEBI" id="CHEBI:18420"/>
    </cofactor>
    <text evidence="1">Binds 1 Mg(2+) ion per subunit.</text>
</comment>
<comment type="subunit">
    <text evidence="1">Heterohexadecamer of 8 large chains and 8 small chains; disulfide-linked. The disulfide link is formed within the large subunit homodimers.</text>
</comment>
<comment type="subcellular location">
    <subcellularLocation>
        <location>Plastid</location>
        <location>Chloroplast</location>
    </subcellularLocation>
</comment>
<comment type="PTM">
    <text evidence="1">The disulfide bond which can form in the large chain dimeric partners within the hexadecamer appears to be associated with oxidative stress and protein turnover.</text>
</comment>
<comment type="miscellaneous">
    <text evidence="1">The basic functional RuBisCO is composed of a large chain homodimer in a 'head-to-tail' conformation. In form I RuBisCO this homodimer is arranged in a barrel-like tetramer with the small subunits forming a tetrameric 'cap' on each end of the 'barrel'.</text>
</comment>
<comment type="similarity">
    <text evidence="1">Belongs to the RuBisCO large chain family. Type I subfamily.</text>
</comment>
<protein>
    <recommendedName>
        <fullName evidence="1">Ribulose bisphosphate carboxylase large chain</fullName>
        <shortName evidence="1">RuBisCO large subunit</shortName>
        <ecNumber evidence="1">4.1.1.39</ecNumber>
    </recommendedName>
</protein>
<sequence length="465" mass="51646">VGFKAGVKDYKLTYYTPEYVTKDTDILAAFRVTPQPGVPPEEAGAAVAAESSTGTWTTVWTDGLTSLDRYKGRCYNIEPVAGEENQYICYVAYPLDLFEEGSVTNMFTSIVGNVFGFKALRALRLEDLRIPPEYSKTFQGPLHGIQVERDKLNKYGRPLLGCTIKPKLGLSAKNYGRAVYECLRGGLDFTKDDENVNSQPFMRWRDRFLFCAEAIYKSQAETGEIKGHYLNATAGTCEEMIKRAVFARELGVPIVMHDYLTGGFTANTSLAHYCRDNGLLLHIHRAMHAVIDRQKNHGMHFRVLAKALRLSGGDHIHAGTVVGKLEGERDITLGFVDLLRDDFIEKDRSRGIYFTQDWVSLPGVLPVASGGIHVWHMPALTEIFGDDSVLQFGGGTLGHPWGNAPGAVANRVALEACVQARNEGRDLAREGNEIIREASKWSPELAAACEVWKEIKFEFPAMDTL</sequence>
<dbReference type="EC" id="4.1.1.39" evidence="1"/>
<dbReference type="EMBL" id="L12566">
    <property type="protein sequence ID" value="AAA32637.2"/>
    <property type="molecule type" value="Genomic_DNA"/>
</dbReference>
<dbReference type="SMR" id="Q07209"/>
<dbReference type="GO" id="GO:0009507">
    <property type="term" value="C:chloroplast"/>
    <property type="evidence" value="ECO:0007669"/>
    <property type="project" value="UniProtKB-SubCell"/>
</dbReference>
<dbReference type="GO" id="GO:0000287">
    <property type="term" value="F:magnesium ion binding"/>
    <property type="evidence" value="ECO:0007669"/>
    <property type="project" value="InterPro"/>
</dbReference>
<dbReference type="GO" id="GO:0004497">
    <property type="term" value="F:monooxygenase activity"/>
    <property type="evidence" value="ECO:0007669"/>
    <property type="project" value="UniProtKB-KW"/>
</dbReference>
<dbReference type="GO" id="GO:0016984">
    <property type="term" value="F:ribulose-bisphosphate carboxylase activity"/>
    <property type="evidence" value="ECO:0007669"/>
    <property type="project" value="UniProtKB-EC"/>
</dbReference>
<dbReference type="GO" id="GO:0009853">
    <property type="term" value="P:photorespiration"/>
    <property type="evidence" value="ECO:0007669"/>
    <property type="project" value="UniProtKB-KW"/>
</dbReference>
<dbReference type="GO" id="GO:0019253">
    <property type="term" value="P:reductive pentose-phosphate cycle"/>
    <property type="evidence" value="ECO:0007669"/>
    <property type="project" value="UniProtKB-KW"/>
</dbReference>
<dbReference type="CDD" id="cd08212">
    <property type="entry name" value="RuBisCO_large_I"/>
    <property type="match status" value="1"/>
</dbReference>
<dbReference type="FunFam" id="3.20.20.110:FF:000001">
    <property type="entry name" value="Ribulose bisphosphate carboxylase large chain"/>
    <property type="match status" value="1"/>
</dbReference>
<dbReference type="FunFam" id="3.30.70.150:FF:000001">
    <property type="entry name" value="Ribulose bisphosphate carboxylase large chain"/>
    <property type="match status" value="1"/>
</dbReference>
<dbReference type="Gene3D" id="3.20.20.110">
    <property type="entry name" value="Ribulose bisphosphate carboxylase, large subunit, C-terminal domain"/>
    <property type="match status" value="1"/>
</dbReference>
<dbReference type="Gene3D" id="3.30.70.150">
    <property type="entry name" value="RuBisCO large subunit, N-terminal domain"/>
    <property type="match status" value="1"/>
</dbReference>
<dbReference type="HAMAP" id="MF_01338">
    <property type="entry name" value="RuBisCO_L_type1"/>
    <property type="match status" value="1"/>
</dbReference>
<dbReference type="InterPro" id="IPR033966">
    <property type="entry name" value="RuBisCO"/>
</dbReference>
<dbReference type="InterPro" id="IPR020878">
    <property type="entry name" value="RuBisCo_large_chain_AS"/>
</dbReference>
<dbReference type="InterPro" id="IPR000685">
    <property type="entry name" value="RuBisCO_lsu_C"/>
</dbReference>
<dbReference type="InterPro" id="IPR036376">
    <property type="entry name" value="RuBisCO_lsu_C_sf"/>
</dbReference>
<dbReference type="InterPro" id="IPR017443">
    <property type="entry name" value="RuBisCO_lsu_fd_N"/>
</dbReference>
<dbReference type="InterPro" id="IPR036422">
    <property type="entry name" value="RuBisCO_lsu_N_sf"/>
</dbReference>
<dbReference type="InterPro" id="IPR020888">
    <property type="entry name" value="RuBisCO_lsuI"/>
</dbReference>
<dbReference type="NCBIfam" id="NF003252">
    <property type="entry name" value="PRK04208.1"/>
    <property type="match status" value="1"/>
</dbReference>
<dbReference type="PANTHER" id="PTHR42704">
    <property type="entry name" value="RIBULOSE BISPHOSPHATE CARBOXYLASE"/>
    <property type="match status" value="1"/>
</dbReference>
<dbReference type="PANTHER" id="PTHR42704:SF15">
    <property type="entry name" value="RIBULOSE BISPHOSPHATE CARBOXYLASE LARGE CHAIN"/>
    <property type="match status" value="1"/>
</dbReference>
<dbReference type="Pfam" id="PF00016">
    <property type="entry name" value="RuBisCO_large"/>
    <property type="match status" value="1"/>
</dbReference>
<dbReference type="Pfam" id="PF02788">
    <property type="entry name" value="RuBisCO_large_N"/>
    <property type="match status" value="1"/>
</dbReference>
<dbReference type="SFLD" id="SFLDG01052">
    <property type="entry name" value="RuBisCO"/>
    <property type="match status" value="1"/>
</dbReference>
<dbReference type="SFLD" id="SFLDS00014">
    <property type="entry name" value="RuBisCO"/>
    <property type="match status" value="1"/>
</dbReference>
<dbReference type="SFLD" id="SFLDG00301">
    <property type="entry name" value="RuBisCO-like_proteins"/>
    <property type="match status" value="1"/>
</dbReference>
<dbReference type="SUPFAM" id="SSF51649">
    <property type="entry name" value="RuBisCo, C-terminal domain"/>
    <property type="match status" value="1"/>
</dbReference>
<dbReference type="SUPFAM" id="SSF54966">
    <property type="entry name" value="RuBisCO, large subunit, small (N-terminal) domain"/>
    <property type="match status" value="1"/>
</dbReference>
<dbReference type="PROSITE" id="PS00157">
    <property type="entry name" value="RUBISCO_LARGE"/>
    <property type="match status" value="1"/>
</dbReference>
<reference key="1">
    <citation type="journal article" date="1992" name="Aust. Syst. Bot.">
        <title>Affinities of the Australian endemic Akaniaceae: new evidence from rbcL sequences.</title>
        <authorList>
            <person name="Gadek P.A."/>
            <person name="Quinn C.J."/>
            <person name="Rodman J.E."/>
            <person name="Karol K.G."/>
            <person name="Conti E."/>
            <person name="Price R.A."/>
            <person name="Fernando E.S."/>
        </authorList>
        <dbReference type="AGRICOLA" id="IND93029186"/>
    </citation>
    <scope>NUCLEOTIDE SEQUENCE [GENOMIC DNA]</scope>
</reference>